<proteinExistence type="inferred from homology"/>
<organism>
    <name type="scientific">Pyrococcus horikoshii (strain ATCC 700860 / DSM 12428 / JCM 9974 / NBRC 100139 / OT-3)</name>
    <dbReference type="NCBI Taxonomy" id="70601"/>
    <lineage>
        <taxon>Archaea</taxon>
        <taxon>Methanobacteriati</taxon>
        <taxon>Methanobacteriota</taxon>
        <taxon>Thermococci</taxon>
        <taxon>Thermococcales</taxon>
        <taxon>Thermococcaceae</taxon>
        <taxon>Pyrococcus</taxon>
    </lineage>
</organism>
<comment type="sequence caution" evidence="2">
    <conflict type="erroneous initiation">
        <sequence resource="EMBL-CDS" id="BAA30927"/>
    </conflict>
</comment>
<feature type="chain" id="PRO_0000144863" description="Putative HTH-type transcriptional regulatory protein PH1808">
    <location>
        <begin position="1"/>
        <end position="315"/>
    </location>
</feature>
<feature type="domain" description="HTH cro/C1-type" evidence="1">
    <location>
        <begin position="131"/>
        <end position="189"/>
    </location>
</feature>
<feature type="DNA-binding region" description="H-T-H motif" evidence="1">
    <location>
        <begin position="142"/>
        <end position="161"/>
    </location>
</feature>
<reference key="1">
    <citation type="journal article" date="1998" name="DNA Res.">
        <title>Complete sequence and gene organization of the genome of a hyper-thermophilic archaebacterium, Pyrococcus horikoshii OT3.</title>
        <authorList>
            <person name="Kawarabayasi Y."/>
            <person name="Sawada M."/>
            <person name="Horikawa H."/>
            <person name="Haikawa Y."/>
            <person name="Hino Y."/>
            <person name="Yamamoto S."/>
            <person name="Sekine M."/>
            <person name="Baba S."/>
            <person name="Kosugi H."/>
            <person name="Hosoyama A."/>
            <person name="Nagai Y."/>
            <person name="Sakai M."/>
            <person name="Ogura K."/>
            <person name="Otsuka R."/>
            <person name="Nakazawa H."/>
            <person name="Takamiya M."/>
            <person name="Ohfuku Y."/>
            <person name="Funahashi T."/>
            <person name="Tanaka T."/>
            <person name="Kudoh Y."/>
            <person name="Yamazaki J."/>
            <person name="Kushida N."/>
            <person name="Oguchi A."/>
            <person name="Aoki K."/>
            <person name="Yoshizawa T."/>
            <person name="Nakamura Y."/>
            <person name="Robb F.T."/>
            <person name="Horikoshi K."/>
            <person name="Masuchi Y."/>
            <person name="Shizuya H."/>
            <person name="Kikuchi H."/>
        </authorList>
    </citation>
    <scope>NUCLEOTIDE SEQUENCE [LARGE SCALE GENOMIC DNA]</scope>
    <source>
        <strain>ATCC 700860 / DSM 12428 / JCM 9974 / NBRC 100139 / OT-3</strain>
    </source>
</reference>
<evidence type="ECO:0000255" key="1">
    <source>
        <dbReference type="HAMAP-Rule" id="MF_00584"/>
    </source>
</evidence>
<evidence type="ECO:0000305" key="2"/>
<name>Y1808_PYRHO</name>
<sequence>MERNELVNFVEGILKRIGFRTMKLEFRGGCFDLVATRQLLLLFIKALANIDKFSEEQAEDLKKLAKLFKASPLLVGLRSKNAELEDGVVYERFGIYAITPGTLYSMFAEGEPPLIIAERGGFYVRIDGKKLKALREEHGYSITELAGILGISRKSLQRYEKGESVVSLEVALRLEEVFDEPLVKPIDVLRARLKDVTLTSEPDNILEKEVFEKLRKLGMSVVKIKTAPFNAITKEEEDDIELLTGIDERKTGRTLKRAELVSQMAEVVGSDGVFVVKKARMEVVRNVPILPKKLLEEIKDADELLELIRDLKFKS</sequence>
<gene>
    <name type="ordered locus">PH1808</name>
</gene>
<accession>O59472</accession>
<keyword id="KW-0238">DNA-binding</keyword>
<keyword id="KW-0804">Transcription</keyword>
<keyword id="KW-0805">Transcription regulation</keyword>
<protein>
    <recommendedName>
        <fullName evidence="1">Putative HTH-type transcriptional regulatory protein PH1808</fullName>
    </recommendedName>
</protein>
<dbReference type="EMBL" id="BA000001">
    <property type="protein sequence ID" value="BAA30927.1"/>
    <property type="status" value="ALT_INIT"/>
    <property type="molecule type" value="Genomic_DNA"/>
</dbReference>
<dbReference type="PIR" id="H71191">
    <property type="entry name" value="H71191"/>
</dbReference>
<dbReference type="RefSeq" id="WP_048053613.1">
    <property type="nucleotide sequence ID" value="NC_000961.1"/>
</dbReference>
<dbReference type="SMR" id="O59472"/>
<dbReference type="STRING" id="70601.gene:9378810"/>
<dbReference type="EnsemblBacteria" id="BAA30927">
    <property type="protein sequence ID" value="BAA30927"/>
    <property type="gene ID" value="BAA30927"/>
</dbReference>
<dbReference type="GeneID" id="1442650"/>
<dbReference type="KEGG" id="pho:PH1808"/>
<dbReference type="eggNOG" id="arCOG04152">
    <property type="taxonomic scope" value="Archaea"/>
</dbReference>
<dbReference type="OrthoDB" id="31424at2157"/>
<dbReference type="Proteomes" id="UP000000752">
    <property type="component" value="Chromosome"/>
</dbReference>
<dbReference type="GO" id="GO:0003677">
    <property type="term" value="F:DNA binding"/>
    <property type="evidence" value="ECO:0007669"/>
    <property type="project" value="UniProtKB-KW"/>
</dbReference>
<dbReference type="GO" id="GO:0003700">
    <property type="term" value="F:DNA-binding transcription factor activity"/>
    <property type="evidence" value="ECO:0007669"/>
    <property type="project" value="UniProtKB-UniRule"/>
</dbReference>
<dbReference type="CDD" id="cd00093">
    <property type="entry name" value="HTH_XRE"/>
    <property type="match status" value="1"/>
</dbReference>
<dbReference type="Gene3D" id="1.10.260.40">
    <property type="entry name" value="lambda repressor-like DNA-binding domains"/>
    <property type="match status" value="1"/>
</dbReference>
<dbReference type="HAMAP" id="MF_00584">
    <property type="entry name" value="HTH_type_cro_C1"/>
    <property type="match status" value="1"/>
</dbReference>
<dbReference type="InterPro" id="IPR020886">
    <property type="entry name" value="Arc_TR_HTH"/>
</dbReference>
<dbReference type="InterPro" id="IPR001387">
    <property type="entry name" value="Cro/C1-type_HTH"/>
</dbReference>
<dbReference type="InterPro" id="IPR010982">
    <property type="entry name" value="Lambda_DNA-bd_dom_sf"/>
</dbReference>
<dbReference type="NCBIfam" id="NF003162">
    <property type="entry name" value="PRK04140.1"/>
    <property type="match status" value="1"/>
</dbReference>
<dbReference type="Pfam" id="PF01381">
    <property type="entry name" value="HTH_3"/>
    <property type="match status" value="1"/>
</dbReference>
<dbReference type="SMART" id="SM00530">
    <property type="entry name" value="HTH_XRE"/>
    <property type="match status" value="1"/>
</dbReference>
<dbReference type="SUPFAM" id="SSF47413">
    <property type="entry name" value="lambda repressor-like DNA-binding domains"/>
    <property type="match status" value="1"/>
</dbReference>
<dbReference type="PROSITE" id="PS50943">
    <property type="entry name" value="HTH_CROC1"/>
    <property type="match status" value="1"/>
</dbReference>